<organism>
    <name type="scientific">Methylococcus capsulatus (strain ATCC 33009 / NCIMB 11132 / Bath)</name>
    <dbReference type="NCBI Taxonomy" id="243233"/>
    <lineage>
        <taxon>Bacteria</taxon>
        <taxon>Pseudomonadati</taxon>
        <taxon>Pseudomonadota</taxon>
        <taxon>Gammaproteobacteria</taxon>
        <taxon>Methylococcales</taxon>
        <taxon>Methylococcaceae</taxon>
        <taxon>Methylococcus</taxon>
    </lineage>
</organism>
<reference key="1">
    <citation type="journal article" date="2004" name="PLoS Biol.">
        <title>Genomic insights into methanotrophy: the complete genome sequence of Methylococcus capsulatus (Bath).</title>
        <authorList>
            <person name="Ward N.L."/>
            <person name="Larsen O."/>
            <person name="Sakwa J."/>
            <person name="Bruseth L."/>
            <person name="Khouri H.M."/>
            <person name="Durkin A.S."/>
            <person name="Dimitrov G."/>
            <person name="Jiang L."/>
            <person name="Scanlan D."/>
            <person name="Kang K.H."/>
            <person name="Lewis M.R."/>
            <person name="Nelson K.E."/>
            <person name="Methe B.A."/>
            <person name="Wu M."/>
            <person name="Heidelberg J.F."/>
            <person name="Paulsen I.T."/>
            <person name="Fouts D.E."/>
            <person name="Ravel J."/>
            <person name="Tettelin H."/>
            <person name="Ren Q."/>
            <person name="Read T.D."/>
            <person name="DeBoy R.T."/>
            <person name="Seshadri R."/>
            <person name="Salzberg S.L."/>
            <person name="Jensen H.B."/>
            <person name="Birkeland N.K."/>
            <person name="Nelson W.C."/>
            <person name="Dodson R.J."/>
            <person name="Grindhaug S.H."/>
            <person name="Holt I.E."/>
            <person name="Eidhammer I."/>
            <person name="Jonasen I."/>
            <person name="Vanaken S."/>
            <person name="Utterback T.R."/>
            <person name="Feldblyum T.V."/>
            <person name="Fraser C.M."/>
            <person name="Lillehaug J.R."/>
            <person name="Eisen J.A."/>
        </authorList>
    </citation>
    <scope>NUCLEOTIDE SEQUENCE [LARGE SCALE GENOMIC DNA]</scope>
    <source>
        <strain>ATCC 33009 / NCIMB 11132 / Bath</strain>
    </source>
</reference>
<name>RL9_METCA</name>
<feature type="chain" id="PRO_0000236543" description="Large ribosomal subunit protein bL9">
    <location>
        <begin position="1"/>
        <end position="148"/>
    </location>
</feature>
<protein>
    <recommendedName>
        <fullName evidence="1">Large ribosomal subunit protein bL9</fullName>
    </recommendedName>
    <alternativeName>
        <fullName evidence="2">50S ribosomal protein L9</fullName>
    </alternativeName>
</protein>
<accession>Q606I1</accession>
<sequence length="148" mass="15742">MDVILLEKVPNLGSLGDKVSVRPGYGRNFLIPKGKAVAATAAKLAEFEQRRAELEKKASEELAAAQARAEAVARLNVSIAQKAGEEGKLYGSVGTKDIAEAVTAAGVPVERHEVRLPHGPIRLAGDYEITLHLHSDVNATLNLKVIGE</sequence>
<gene>
    <name evidence="1" type="primary">rplI</name>
    <name type="ordered locus">MCA2035</name>
</gene>
<proteinExistence type="inferred from homology"/>
<keyword id="KW-1185">Reference proteome</keyword>
<keyword id="KW-0687">Ribonucleoprotein</keyword>
<keyword id="KW-0689">Ribosomal protein</keyword>
<keyword id="KW-0694">RNA-binding</keyword>
<keyword id="KW-0699">rRNA-binding</keyword>
<evidence type="ECO:0000255" key="1">
    <source>
        <dbReference type="HAMAP-Rule" id="MF_00503"/>
    </source>
</evidence>
<evidence type="ECO:0000305" key="2"/>
<dbReference type="EMBL" id="AE017282">
    <property type="protein sequence ID" value="AAU91713.1"/>
    <property type="molecule type" value="Genomic_DNA"/>
</dbReference>
<dbReference type="RefSeq" id="WP_010961280.1">
    <property type="nucleotide sequence ID" value="NC_002977.6"/>
</dbReference>
<dbReference type="SMR" id="Q606I1"/>
<dbReference type="STRING" id="243233.MCA2035"/>
<dbReference type="GeneID" id="88224261"/>
<dbReference type="KEGG" id="mca:MCA2035"/>
<dbReference type="eggNOG" id="COG0359">
    <property type="taxonomic scope" value="Bacteria"/>
</dbReference>
<dbReference type="HOGENOM" id="CLU_078938_4_1_6"/>
<dbReference type="Proteomes" id="UP000006821">
    <property type="component" value="Chromosome"/>
</dbReference>
<dbReference type="GO" id="GO:1990904">
    <property type="term" value="C:ribonucleoprotein complex"/>
    <property type="evidence" value="ECO:0007669"/>
    <property type="project" value="UniProtKB-KW"/>
</dbReference>
<dbReference type="GO" id="GO:0005840">
    <property type="term" value="C:ribosome"/>
    <property type="evidence" value="ECO:0007669"/>
    <property type="project" value="UniProtKB-KW"/>
</dbReference>
<dbReference type="GO" id="GO:0019843">
    <property type="term" value="F:rRNA binding"/>
    <property type="evidence" value="ECO:0007669"/>
    <property type="project" value="UniProtKB-UniRule"/>
</dbReference>
<dbReference type="GO" id="GO:0003735">
    <property type="term" value="F:structural constituent of ribosome"/>
    <property type="evidence" value="ECO:0007669"/>
    <property type="project" value="InterPro"/>
</dbReference>
<dbReference type="GO" id="GO:0006412">
    <property type="term" value="P:translation"/>
    <property type="evidence" value="ECO:0007669"/>
    <property type="project" value="UniProtKB-UniRule"/>
</dbReference>
<dbReference type="Gene3D" id="3.10.430.100">
    <property type="entry name" value="Ribosomal protein L9, C-terminal domain"/>
    <property type="match status" value="1"/>
</dbReference>
<dbReference type="Gene3D" id="3.40.5.10">
    <property type="entry name" value="Ribosomal protein L9, N-terminal domain"/>
    <property type="match status" value="1"/>
</dbReference>
<dbReference type="HAMAP" id="MF_00503">
    <property type="entry name" value="Ribosomal_bL9"/>
    <property type="match status" value="1"/>
</dbReference>
<dbReference type="InterPro" id="IPR000244">
    <property type="entry name" value="Ribosomal_bL9"/>
</dbReference>
<dbReference type="InterPro" id="IPR009027">
    <property type="entry name" value="Ribosomal_bL9/RNase_H1_N"/>
</dbReference>
<dbReference type="InterPro" id="IPR020594">
    <property type="entry name" value="Ribosomal_bL9_bac/chp"/>
</dbReference>
<dbReference type="InterPro" id="IPR020069">
    <property type="entry name" value="Ribosomal_bL9_C"/>
</dbReference>
<dbReference type="InterPro" id="IPR036791">
    <property type="entry name" value="Ribosomal_bL9_C_sf"/>
</dbReference>
<dbReference type="InterPro" id="IPR020070">
    <property type="entry name" value="Ribosomal_bL9_N"/>
</dbReference>
<dbReference type="InterPro" id="IPR036935">
    <property type="entry name" value="Ribosomal_bL9_N_sf"/>
</dbReference>
<dbReference type="NCBIfam" id="TIGR00158">
    <property type="entry name" value="L9"/>
    <property type="match status" value="1"/>
</dbReference>
<dbReference type="PANTHER" id="PTHR21368">
    <property type="entry name" value="50S RIBOSOMAL PROTEIN L9"/>
    <property type="match status" value="1"/>
</dbReference>
<dbReference type="Pfam" id="PF03948">
    <property type="entry name" value="Ribosomal_L9_C"/>
    <property type="match status" value="1"/>
</dbReference>
<dbReference type="Pfam" id="PF01281">
    <property type="entry name" value="Ribosomal_L9_N"/>
    <property type="match status" value="1"/>
</dbReference>
<dbReference type="SUPFAM" id="SSF55658">
    <property type="entry name" value="L9 N-domain-like"/>
    <property type="match status" value="1"/>
</dbReference>
<dbReference type="SUPFAM" id="SSF55653">
    <property type="entry name" value="Ribosomal protein L9 C-domain"/>
    <property type="match status" value="1"/>
</dbReference>
<dbReference type="PROSITE" id="PS00651">
    <property type="entry name" value="RIBOSOMAL_L9"/>
    <property type="match status" value="1"/>
</dbReference>
<comment type="function">
    <text evidence="1">Binds to the 23S rRNA.</text>
</comment>
<comment type="similarity">
    <text evidence="1">Belongs to the bacterial ribosomal protein bL9 family.</text>
</comment>